<proteinExistence type="inferred from homology"/>
<organism>
    <name type="scientific">Cereibacter sphaeroides (strain ATCC 17025 / ATH 2.4.3)</name>
    <name type="common">Rhodobacter sphaeroides</name>
    <dbReference type="NCBI Taxonomy" id="349102"/>
    <lineage>
        <taxon>Bacteria</taxon>
        <taxon>Pseudomonadati</taxon>
        <taxon>Pseudomonadota</taxon>
        <taxon>Alphaproteobacteria</taxon>
        <taxon>Rhodobacterales</taxon>
        <taxon>Paracoccaceae</taxon>
        <taxon>Cereibacter</taxon>
    </lineage>
</organism>
<accession>A4WQ76</accession>
<sequence length="519" mass="56325">MSDLFEDPAPARNTPEYTVSELSGAVKRVIEGEFGLVRVRGEIGRVSRPASGHLYFDLKDDRAVIAAICWKGQAGRLSVRPEEGMEVVATGRMTTFPGQSKYQIIVEDMAPAGAGALMAMLEKRRAALAAEGLFDAARKRPLPFLPRVIGVVTSPSGAVIRDILHRLRDRFPSHVLIWPVAVQGEKCAPEVAAAIRGFNALPDGGPIPRPDLLIVARGGGSLEDLWGFNEEIVVRAAAESRIPLISAVGHETDTTLIDHAADRRAPTPTAAAEMAVPVRLDLLAGLDGQGARLSRCAAETIRRRDQRLRDLSRALPRLDSLVAGPSQRFDLWSARLSGALGQSVAARRARLEPLGAHLRPRLLADLVARQKDRLADRGRGLETCLGRRSERARDRFEALSGRLAPAFARLVAESERTNRRDAAALGALAARLEAAPEARLLRLADRLEALDRLRQTLGYRETLRRGYAVVRADGEVVTTKTAAERAASLEIEFQDGRLTLGARKPRKGKAEPPAQGSLL</sequence>
<comment type="function">
    <text evidence="1">Bidirectionally degrades single-stranded DNA into large acid-insoluble oligonucleotides, which are then degraded further into small acid-soluble oligonucleotides.</text>
</comment>
<comment type="catalytic activity">
    <reaction evidence="1">
        <text>Exonucleolytic cleavage in either 5'- to 3'- or 3'- to 5'-direction to yield nucleoside 5'-phosphates.</text>
        <dbReference type="EC" id="3.1.11.6"/>
    </reaction>
</comment>
<comment type="subunit">
    <text evidence="1">Heterooligomer composed of large and small subunits.</text>
</comment>
<comment type="subcellular location">
    <subcellularLocation>
        <location evidence="1">Cytoplasm</location>
    </subcellularLocation>
</comment>
<comment type="similarity">
    <text evidence="1">Belongs to the XseA family.</text>
</comment>
<name>EX7L_CERS5</name>
<protein>
    <recommendedName>
        <fullName evidence="1">Exodeoxyribonuclease 7 large subunit</fullName>
        <ecNumber evidence="1">3.1.11.6</ecNumber>
    </recommendedName>
    <alternativeName>
        <fullName evidence="1">Exodeoxyribonuclease VII large subunit</fullName>
        <shortName evidence="1">Exonuclease VII large subunit</shortName>
    </alternativeName>
</protein>
<reference key="1">
    <citation type="submission" date="2007-04" db="EMBL/GenBank/DDBJ databases">
        <title>Complete sequence of chromosome of Rhodobacter sphaeroides ATCC 17025.</title>
        <authorList>
            <consortium name="US DOE Joint Genome Institute"/>
            <person name="Copeland A."/>
            <person name="Lucas S."/>
            <person name="Lapidus A."/>
            <person name="Barry K."/>
            <person name="Detter J.C."/>
            <person name="Glavina del Rio T."/>
            <person name="Hammon N."/>
            <person name="Israni S."/>
            <person name="Dalin E."/>
            <person name="Tice H."/>
            <person name="Pitluck S."/>
            <person name="Chertkov O."/>
            <person name="Brettin T."/>
            <person name="Bruce D."/>
            <person name="Han C."/>
            <person name="Schmutz J."/>
            <person name="Larimer F."/>
            <person name="Land M."/>
            <person name="Hauser L."/>
            <person name="Kyrpides N."/>
            <person name="Kim E."/>
            <person name="Richardson P."/>
            <person name="Mackenzie C."/>
            <person name="Choudhary M."/>
            <person name="Donohue T.J."/>
            <person name="Kaplan S."/>
        </authorList>
    </citation>
    <scope>NUCLEOTIDE SEQUENCE [LARGE SCALE GENOMIC DNA]</scope>
    <source>
        <strain>ATCC 17025 / ATH 2.4.3</strain>
    </source>
</reference>
<gene>
    <name evidence="1" type="primary">xseA</name>
    <name type="ordered locus">Rsph17025_0634</name>
</gene>
<dbReference type="EC" id="3.1.11.6" evidence="1"/>
<dbReference type="EMBL" id="CP000661">
    <property type="protein sequence ID" value="ABP69540.1"/>
    <property type="molecule type" value="Genomic_DNA"/>
</dbReference>
<dbReference type="SMR" id="A4WQ76"/>
<dbReference type="STRING" id="349102.Rsph17025_0634"/>
<dbReference type="KEGG" id="rsq:Rsph17025_0634"/>
<dbReference type="eggNOG" id="COG1570">
    <property type="taxonomic scope" value="Bacteria"/>
</dbReference>
<dbReference type="HOGENOM" id="CLU_023625_3_1_5"/>
<dbReference type="BioCyc" id="RSPH349102:G1G8M-655-MONOMER"/>
<dbReference type="GO" id="GO:0005737">
    <property type="term" value="C:cytoplasm"/>
    <property type="evidence" value="ECO:0007669"/>
    <property type="project" value="UniProtKB-SubCell"/>
</dbReference>
<dbReference type="GO" id="GO:0009318">
    <property type="term" value="C:exodeoxyribonuclease VII complex"/>
    <property type="evidence" value="ECO:0007669"/>
    <property type="project" value="InterPro"/>
</dbReference>
<dbReference type="GO" id="GO:0008855">
    <property type="term" value="F:exodeoxyribonuclease VII activity"/>
    <property type="evidence" value="ECO:0007669"/>
    <property type="project" value="UniProtKB-UniRule"/>
</dbReference>
<dbReference type="GO" id="GO:0003676">
    <property type="term" value="F:nucleic acid binding"/>
    <property type="evidence" value="ECO:0007669"/>
    <property type="project" value="InterPro"/>
</dbReference>
<dbReference type="GO" id="GO:0006308">
    <property type="term" value="P:DNA catabolic process"/>
    <property type="evidence" value="ECO:0007669"/>
    <property type="project" value="UniProtKB-UniRule"/>
</dbReference>
<dbReference type="CDD" id="cd04489">
    <property type="entry name" value="ExoVII_LU_OBF"/>
    <property type="match status" value="1"/>
</dbReference>
<dbReference type="HAMAP" id="MF_00378">
    <property type="entry name" value="Exonuc_7_L"/>
    <property type="match status" value="1"/>
</dbReference>
<dbReference type="InterPro" id="IPR003753">
    <property type="entry name" value="Exonuc_VII_L"/>
</dbReference>
<dbReference type="InterPro" id="IPR020579">
    <property type="entry name" value="Exonuc_VII_lsu_C"/>
</dbReference>
<dbReference type="InterPro" id="IPR025824">
    <property type="entry name" value="OB-fold_nuc-bd_dom"/>
</dbReference>
<dbReference type="NCBIfam" id="TIGR00237">
    <property type="entry name" value="xseA"/>
    <property type="match status" value="1"/>
</dbReference>
<dbReference type="PANTHER" id="PTHR30008">
    <property type="entry name" value="EXODEOXYRIBONUCLEASE 7 LARGE SUBUNIT"/>
    <property type="match status" value="1"/>
</dbReference>
<dbReference type="PANTHER" id="PTHR30008:SF0">
    <property type="entry name" value="EXODEOXYRIBONUCLEASE 7 LARGE SUBUNIT"/>
    <property type="match status" value="1"/>
</dbReference>
<dbReference type="Pfam" id="PF02601">
    <property type="entry name" value="Exonuc_VII_L"/>
    <property type="match status" value="2"/>
</dbReference>
<dbReference type="Pfam" id="PF13742">
    <property type="entry name" value="tRNA_anti_2"/>
    <property type="match status" value="1"/>
</dbReference>
<feature type="chain" id="PRO_1000048779" description="Exodeoxyribonuclease 7 large subunit">
    <location>
        <begin position="1"/>
        <end position="519"/>
    </location>
</feature>
<keyword id="KW-0963">Cytoplasm</keyword>
<keyword id="KW-0269">Exonuclease</keyword>
<keyword id="KW-0378">Hydrolase</keyword>
<keyword id="KW-0540">Nuclease</keyword>
<evidence type="ECO:0000255" key="1">
    <source>
        <dbReference type="HAMAP-Rule" id="MF_00378"/>
    </source>
</evidence>